<keyword id="KW-0002">3D-structure</keyword>
<keyword id="KW-0025">Alternative splicing</keyword>
<keyword id="KW-0966">Cell projection</keyword>
<keyword id="KW-0969">Cilium</keyword>
<keyword id="KW-0963">Cytoplasm</keyword>
<keyword id="KW-0206">Cytoskeleton</keyword>
<keyword id="KW-0225">Disease variant</keyword>
<keyword id="KW-0282">Flagellum</keyword>
<keyword id="KW-1056">Heterotaxy</keyword>
<keyword id="KW-1267">Proteomics identification</keyword>
<keyword id="KW-1185">Reference proteome</keyword>
<keyword id="KW-0677">Repeat</keyword>
<keyword id="KW-0853">WD repeat</keyword>
<protein>
    <recommendedName>
        <fullName evidence="13">Cilia- and flagella-associated protein 52</fullName>
    </recommendedName>
    <alternativeName>
        <fullName evidence="13">WD repeat-containing protein 16</fullName>
    </alternativeName>
    <alternativeName>
        <fullName evidence="11">WD40-repeat protein up-regulated in HCC</fullName>
    </alternativeName>
</protein>
<reference key="1">
    <citation type="journal article" date="2005" name="Neoplasia">
        <title>WDRPUH, a novel WD-repeat-containing protein, is highly expressed in human hepatocellular carcinoma and involved in cell proliferation.</title>
        <authorList>
            <person name="Silva F.P."/>
            <person name="Hamamoto R."/>
            <person name="Nakamura Y."/>
            <person name="Furukawa Y."/>
        </authorList>
    </citation>
    <scope>NUCLEOTIDE SEQUENCE [MRNA] (ISOFORM 1)</scope>
    <scope>FUNCTION</scope>
    <scope>INTERACTION WITH HSP70; CCT CHAPERONIN COMPLEX AND BRCA2</scope>
    <scope>SUBCELLULAR LOCATION</scope>
    <scope>TISSUE SPECIFICITY</scope>
</reference>
<reference key="2">
    <citation type="journal article" date="2004" name="Nat. Genet.">
        <title>Complete sequencing and characterization of 21,243 full-length human cDNAs.</title>
        <authorList>
            <person name="Ota T."/>
            <person name="Suzuki Y."/>
            <person name="Nishikawa T."/>
            <person name="Otsuki T."/>
            <person name="Sugiyama T."/>
            <person name="Irie R."/>
            <person name="Wakamatsu A."/>
            <person name="Hayashi K."/>
            <person name="Sato H."/>
            <person name="Nagai K."/>
            <person name="Kimura K."/>
            <person name="Makita H."/>
            <person name="Sekine M."/>
            <person name="Obayashi M."/>
            <person name="Nishi T."/>
            <person name="Shibahara T."/>
            <person name="Tanaka T."/>
            <person name="Ishii S."/>
            <person name="Yamamoto J."/>
            <person name="Saito K."/>
            <person name="Kawai Y."/>
            <person name="Isono Y."/>
            <person name="Nakamura Y."/>
            <person name="Nagahari K."/>
            <person name="Murakami K."/>
            <person name="Yasuda T."/>
            <person name="Iwayanagi T."/>
            <person name="Wagatsuma M."/>
            <person name="Shiratori A."/>
            <person name="Sudo H."/>
            <person name="Hosoiri T."/>
            <person name="Kaku Y."/>
            <person name="Kodaira H."/>
            <person name="Kondo H."/>
            <person name="Sugawara M."/>
            <person name="Takahashi M."/>
            <person name="Kanda K."/>
            <person name="Yokoi T."/>
            <person name="Furuya T."/>
            <person name="Kikkawa E."/>
            <person name="Omura Y."/>
            <person name="Abe K."/>
            <person name="Kamihara K."/>
            <person name="Katsuta N."/>
            <person name="Sato K."/>
            <person name="Tanikawa M."/>
            <person name="Yamazaki M."/>
            <person name="Ninomiya K."/>
            <person name="Ishibashi T."/>
            <person name="Yamashita H."/>
            <person name="Murakawa K."/>
            <person name="Fujimori K."/>
            <person name="Tanai H."/>
            <person name="Kimata M."/>
            <person name="Watanabe M."/>
            <person name="Hiraoka S."/>
            <person name="Chiba Y."/>
            <person name="Ishida S."/>
            <person name="Ono Y."/>
            <person name="Takiguchi S."/>
            <person name="Watanabe S."/>
            <person name="Yosida M."/>
            <person name="Hotuta T."/>
            <person name="Kusano J."/>
            <person name="Kanehori K."/>
            <person name="Takahashi-Fujii A."/>
            <person name="Hara H."/>
            <person name="Tanase T.-O."/>
            <person name="Nomura Y."/>
            <person name="Togiya S."/>
            <person name="Komai F."/>
            <person name="Hara R."/>
            <person name="Takeuchi K."/>
            <person name="Arita M."/>
            <person name="Imose N."/>
            <person name="Musashino K."/>
            <person name="Yuuki H."/>
            <person name="Oshima A."/>
            <person name="Sasaki N."/>
            <person name="Aotsuka S."/>
            <person name="Yoshikawa Y."/>
            <person name="Matsunawa H."/>
            <person name="Ichihara T."/>
            <person name="Shiohata N."/>
            <person name="Sano S."/>
            <person name="Moriya S."/>
            <person name="Momiyama H."/>
            <person name="Satoh N."/>
            <person name="Takami S."/>
            <person name="Terashima Y."/>
            <person name="Suzuki O."/>
            <person name="Nakagawa S."/>
            <person name="Senoh A."/>
            <person name="Mizoguchi H."/>
            <person name="Goto Y."/>
            <person name="Shimizu F."/>
            <person name="Wakebe H."/>
            <person name="Hishigaki H."/>
            <person name="Watanabe T."/>
            <person name="Sugiyama A."/>
            <person name="Takemoto M."/>
            <person name="Kawakami B."/>
            <person name="Yamazaki M."/>
            <person name="Watanabe K."/>
            <person name="Kumagai A."/>
            <person name="Itakura S."/>
            <person name="Fukuzumi Y."/>
            <person name="Fujimori Y."/>
            <person name="Komiyama M."/>
            <person name="Tashiro H."/>
            <person name="Tanigami A."/>
            <person name="Fujiwara T."/>
            <person name="Ono T."/>
            <person name="Yamada K."/>
            <person name="Fujii Y."/>
            <person name="Ozaki K."/>
            <person name="Hirao M."/>
            <person name="Ohmori Y."/>
            <person name="Kawabata A."/>
            <person name="Hikiji T."/>
            <person name="Kobatake N."/>
            <person name="Inagaki H."/>
            <person name="Ikema Y."/>
            <person name="Okamoto S."/>
            <person name="Okitani R."/>
            <person name="Kawakami T."/>
            <person name="Noguchi S."/>
            <person name="Itoh T."/>
            <person name="Shigeta K."/>
            <person name="Senba T."/>
            <person name="Matsumura K."/>
            <person name="Nakajima Y."/>
            <person name="Mizuno T."/>
            <person name="Morinaga M."/>
            <person name="Sasaki M."/>
            <person name="Togashi T."/>
            <person name="Oyama M."/>
            <person name="Hata H."/>
            <person name="Watanabe M."/>
            <person name="Komatsu T."/>
            <person name="Mizushima-Sugano J."/>
            <person name="Satoh T."/>
            <person name="Shirai Y."/>
            <person name="Takahashi Y."/>
            <person name="Nakagawa K."/>
            <person name="Okumura K."/>
            <person name="Nagase T."/>
            <person name="Nomura N."/>
            <person name="Kikuchi H."/>
            <person name="Masuho Y."/>
            <person name="Yamashita R."/>
            <person name="Nakai K."/>
            <person name="Yada T."/>
            <person name="Nakamura Y."/>
            <person name="Ohara O."/>
            <person name="Isogai T."/>
            <person name="Sugano S."/>
        </authorList>
    </citation>
    <scope>NUCLEOTIDE SEQUENCE [LARGE SCALE MRNA] (ISOFORMS 1; 2 AND 3)</scope>
    <scope>VARIANT LYS-336</scope>
    <source>
        <tissue>Caudate nucleus</tissue>
        <tissue>Lung</tissue>
        <tissue>Testis</tissue>
    </source>
</reference>
<reference key="3">
    <citation type="journal article" date="2006" name="Nature">
        <title>DNA sequence of human chromosome 17 and analysis of rearrangement in the human lineage.</title>
        <authorList>
            <person name="Zody M.C."/>
            <person name="Garber M."/>
            <person name="Adams D.J."/>
            <person name="Sharpe T."/>
            <person name="Harrow J."/>
            <person name="Lupski J.R."/>
            <person name="Nicholson C."/>
            <person name="Searle S.M."/>
            <person name="Wilming L."/>
            <person name="Young S.K."/>
            <person name="Abouelleil A."/>
            <person name="Allen N.R."/>
            <person name="Bi W."/>
            <person name="Bloom T."/>
            <person name="Borowsky M.L."/>
            <person name="Bugalter B.E."/>
            <person name="Butler J."/>
            <person name="Chang J.L."/>
            <person name="Chen C.-K."/>
            <person name="Cook A."/>
            <person name="Corum B."/>
            <person name="Cuomo C.A."/>
            <person name="de Jong P.J."/>
            <person name="DeCaprio D."/>
            <person name="Dewar K."/>
            <person name="FitzGerald M."/>
            <person name="Gilbert J."/>
            <person name="Gibson R."/>
            <person name="Gnerre S."/>
            <person name="Goldstein S."/>
            <person name="Grafham D.V."/>
            <person name="Grocock R."/>
            <person name="Hafez N."/>
            <person name="Hagopian D.S."/>
            <person name="Hart E."/>
            <person name="Norman C.H."/>
            <person name="Humphray S."/>
            <person name="Jaffe D.B."/>
            <person name="Jones M."/>
            <person name="Kamal M."/>
            <person name="Khodiyar V.K."/>
            <person name="LaButti K."/>
            <person name="Laird G."/>
            <person name="Lehoczky J."/>
            <person name="Liu X."/>
            <person name="Lokyitsang T."/>
            <person name="Loveland J."/>
            <person name="Lui A."/>
            <person name="Macdonald P."/>
            <person name="Major J.E."/>
            <person name="Matthews L."/>
            <person name="Mauceli E."/>
            <person name="McCarroll S.A."/>
            <person name="Mihalev A.H."/>
            <person name="Mudge J."/>
            <person name="Nguyen C."/>
            <person name="Nicol R."/>
            <person name="O'Leary S.B."/>
            <person name="Osoegawa K."/>
            <person name="Schwartz D.C."/>
            <person name="Shaw-Smith C."/>
            <person name="Stankiewicz P."/>
            <person name="Steward C."/>
            <person name="Swarbreck D."/>
            <person name="Venkataraman V."/>
            <person name="Whittaker C.A."/>
            <person name="Yang X."/>
            <person name="Zimmer A.R."/>
            <person name="Bradley A."/>
            <person name="Hubbard T."/>
            <person name="Birren B.W."/>
            <person name="Rogers J."/>
            <person name="Lander E.S."/>
            <person name="Nusbaum C."/>
        </authorList>
    </citation>
    <scope>NUCLEOTIDE SEQUENCE [LARGE SCALE GENOMIC DNA]</scope>
</reference>
<reference key="4">
    <citation type="journal article" date="2004" name="Genome Res.">
        <title>The status, quality, and expansion of the NIH full-length cDNA project: the Mammalian Gene Collection (MGC).</title>
        <authorList>
            <consortium name="The MGC Project Team"/>
        </authorList>
    </citation>
    <scope>NUCLEOTIDE SEQUENCE [LARGE SCALE MRNA] (ISOFORM 1)</scope>
    <scope>VARIANT LYS-336</scope>
    <source>
        <tissue>Testis</tissue>
    </source>
</reference>
<reference evidence="14" key="5">
    <citation type="journal article" date="2022" name="Proc. Natl. Acad. Sci. U.S.A.">
        <title>SPACA9 is a lumenal protein of human ciliary singlet and doublet microtubules.</title>
        <authorList>
            <person name="Gui M."/>
            <person name="Croft J.T."/>
            <person name="Zabeo D."/>
            <person name="Acharya V."/>
            <person name="Kollman J.M."/>
            <person name="Burgoyne T."/>
            <person name="Hoog J.L."/>
            <person name="Brown A."/>
        </authorList>
    </citation>
    <scope>STRUCTURE BY ELECTRON MICROSCOPY (3.60 ANGSTROMS)</scope>
    <scope>FUNCTION</scope>
    <scope>SUBCELLULAR LOCATION</scope>
    <scope>TISSUE SPECIFICITY</scope>
</reference>
<reference key="6">
    <citation type="journal article" date="2020" name="Nat. Commun.">
        <title>CFAP45 deficiency causes situs abnormalities and asthenospermia by disrupting an axonemal adenine nucleotide homeostasis module.</title>
        <authorList>
            <person name="Dougherty G.W."/>
            <person name="Mizuno K."/>
            <person name="Noethe-Menchen T."/>
            <person name="Ikawa Y."/>
            <person name="Boldt K."/>
            <person name="Ta-Shma A."/>
            <person name="Aprea I."/>
            <person name="Minegishi K."/>
            <person name="Pang Y.P."/>
            <person name="Pennekamp P."/>
            <person name="Loges N.T."/>
            <person name="Raidt J."/>
            <person name="Hjeij R."/>
            <person name="Wallmeier J."/>
            <person name="Mussaffi H."/>
            <person name="Perles Z."/>
            <person name="Elpeleg O."/>
            <person name="Rabert F."/>
            <person name="Shiratori H."/>
            <person name="Letteboer S.J."/>
            <person name="Horn N."/>
            <person name="Young S."/>
            <person name="Struenker T."/>
            <person name="Stumme F."/>
            <person name="Werner C."/>
            <person name="Olbrich H."/>
            <person name="Takaoka K."/>
            <person name="Ide T."/>
            <person name="Twan W.K."/>
            <person name="Biebach L."/>
            <person name="Grosse-Onnebrink J."/>
            <person name="Klinkenbusch J.A."/>
            <person name="Praveen K."/>
            <person name="Bracht D.C."/>
            <person name="Hoeben I.M."/>
            <person name="Junger K."/>
            <person name="Guetzlaff J."/>
            <person name="Cindric S."/>
            <person name="Aviram M."/>
            <person name="Kaiser T."/>
            <person name="Memari Y."/>
            <person name="Dzeja P.P."/>
            <person name="Dworniczak B."/>
            <person name="Ueffing M."/>
            <person name="Roepman R."/>
            <person name="Bartscherer K."/>
            <person name="Katsanis N."/>
            <person name="Davis E.E."/>
            <person name="Amirav I."/>
            <person name="Hamada H."/>
            <person name="Omran H."/>
        </authorList>
    </citation>
    <scope>FUNCTION</scope>
    <scope>INTERACTION WITH AK8; CFAP45 AND DNAI1</scope>
    <scope>SUBCELLULAR LOCATION</scope>
    <scope>TISSUE SPECIFICITY</scope>
    <scope>INVOLVEMENT IN HTX10</scope>
    <scope>VARIANT HTX10 ARG-271</scope>
</reference>
<dbReference type="EMBL" id="AB065281">
    <property type="protein sequence ID" value="BAB83743.1"/>
    <property type="molecule type" value="mRNA"/>
</dbReference>
<dbReference type="EMBL" id="AK074435">
    <property type="protein sequence ID" value="BAB85083.1"/>
    <property type="status" value="ALT_FRAME"/>
    <property type="molecule type" value="mRNA"/>
</dbReference>
<dbReference type="EMBL" id="AK094847">
    <property type="protein sequence ID" value="BAC04435.1"/>
    <property type="molecule type" value="mRNA"/>
</dbReference>
<dbReference type="EMBL" id="AK315679">
    <property type="protein sequence ID" value="BAG38044.1"/>
    <property type="molecule type" value="mRNA"/>
</dbReference>
<dbReference type="EMBL" id="AC087501">
    <property type="status" value="NOT_ANNOTATED_CDS"/>
    <property type="molecule type" value="Genomic_DNA"/>
</dbReference>
<dbReference type="EMBL" id="AC118755">
    <property type="status" value="NOT_ANNOTATED_CDS"/>
    <property type="molecule type" value="Genomic_DNA"/>
</dbReference>
<dbReference type="EMBL" id="BC025392">
    <property type="protein sequence ID" value="AAH25392.1"/>
    <property type="molecule type" value="mRNA"/>
</dbReference>
<dbReference type="CCDS" id="CCDS11149.2">
    <molecule id="Q8N1V2-1"/>
</dbReference>
<dbReference type="CCDS" id="CCDS42262.1">
    <molecule id="Q8N1V2-3"/>
</dbReference>
<dbReference type="RefSeq" id="NP_001074025.1">
    <molecule id="Q8N1V2-3"/>
    <property type="nucleotide sequence ID" value="NM_001080556.2"/>
</dbReference>
<dbReference type="RefSeq" id="NP_659491.4">
    <molecule id="Q8N1V2-1"/>
    <property type="nucleotide sequence ID" value="NM_145054.4"/>
</dbReference>
<dbReference type="PDB" id="7UNG">
    <property type="method" value="EM"/>
    <property type="resolution" value="3.60 A"/>
    <property type="chains" value="e/f/g=1-620"/>
</dbReference>
<dbReference type="PDB" id="8J07">
    <property type="method" value="EM"/>
    <property type="resolution" value="4.10 A"/>
    <property type="chains" value="1L/1M/1N/1O/1P/1Q=1-620"/>
</dbReference>
<dbReference type="PDBsum" id="7UNG"/>
<dbReference type="PDBsum" id="8J07"/>
<dbReference type="EMDB" id="EMD-26624"/>
<dbReference type="EMDB" id="EMD-35888"/>
<dbReference type="SMR" id="Q8N1V2"/>
<dbReference type="BioGRID" id="127014">
    <property type="interactions" value="25"/>
</dbReference>
<dbReference type="FunCoup" id="Q8N1V2">
    <property type="interactions" value="72"/>
</dbReference>
<dbReference type="IntAct" id="Q8N1V2">
    <property type="interactions" value="10"/>
</dbReference>
<dbReference type="STRING" id="9606.ENSP00000339449"/>
<dbReference type="iPTMnet" id="Q8N1V2"/>
<dbReference type="PhosphoSitePlus" id="Q8N1V2"/>
<dbReference type="BioMuta" id="CFAP52"/>
<dbReference type="DMDM" id="146291099"/>
<dbReference type="MassIVE" id="Q8N1V2"/>
<dbReference type="PaxDb" id="9606-ENSP00000339449"/>
<dbReference type="PeptideAtlas" id="Q8N1V2"/>
<dbReference type="ProteomicsDB" id="71634">
    <molecule id="Q8N1V2-1"/>
</dbReference>
<dbReference type="ProteomicsDB" id="71635">
    <molecule id="Q8N1V2-2"/>
</dbReference>
<dbReference type="ProteomicsDB" id="71636">
    <molecule id="Q8N1V2-3"/>
</dbReference>
<dbReference type="Antibodypedia" id="12661">
    <property type="antibodies" value="97 antibodies from 20 providers"/>
</dbReference>
<dbReference type="DNASU" id="146845"/>
<dbReference type="Ensembl" id="ENST00000352665.10">
    <molecule id="Q8N1V2-1"/>
    <property type="protein sequence ID" value="ENSP00000339449.5"/>
    <property type="gene ID" value="ENSG00000166596.15"/>
</dbReference>
<dbReference type="Ensembl" id="ENST00000396219.7">
    <molecule id="Q8N1V2-3"/>
    <property type="protein sequence ID" value="ENSP00000379521.3"/>
    <property type="gene ID" value="ENSG00000166596.15"/>
</dbReference>
<dbReference type="GeneID" id="146845"/>
<dbReference type="KEGG" id="hsa:146845"/>
<dbReference type="MANE-Select" id="ENST00000352665.10">
    <property type="protein sequence ID" value="ENSP00000339449.5"/>
    <property type="RefSeq nucleotide sequence ID" value="NM_145054.5"/>
    <property type="RefSeq protein sequence ID" value="NP_659491.4"/>
</dbReference>
<dbReference type="UCSC" id="uc002gly.5">
    <molecule id="Q8N1V2-1"/>
    <property type="organism name" value="human"/>
</dbReference>
<dbReference type="AGR" id="HGNC:16053"/>
<dbReference type="CTD" id="146845"/>
<dbReference type="DisGeNET" id="146845"/>
<dbReference type="GeneCards" id="CFAP52"/>
<dbReference type="HGNC" id="HGNC:16053">
    <property type="gene designation" value="CFAP52"/>
</dbReference>
<dbReference type="HPA" id="ENSG00000166596">
    <property type="expression patterns" value="Tissue enhanced (choroid plexus, fallopian tube)"/>
</dbReference>
<dbReference type="MalaCards" id="CFAP52"/>
<dbReference type="MIM" id="609804">
    <property type="type" value="gene"/>
</dbReference>
<dbReference type="MIM" id="619607">
    <property type="type" value="phenotype"/>
</dbReference>
<dbReference type="neXtProt" id="NX_Q8N1V2"/>
<dbReference type="OpenTargets" id="ENSG00000166596"/>
<dbReference type="Orphanet" id="101063">
    <property type="disease" value="Situs inversus totalis"/>
</dbReference>
<dbReference type="PharmGKB" id="PA38084"/>
<dbReference type="VEuPathDB" id="HostDB:ENSG00000166596"/>
<dbReference type="eggNOG" id="KOG0266">
    <property type="taxonomic scope" value="Eukaryota"/>
</dbReference>
<dbReference type="GeneTree" id="ENSGT00940000157016"/>
<dbReference type="HOGENOM" id="CLU_009244_2_0_1"/>
<dbReference type="InParanoid" id="Q8N1V2"/>
<dbReference type="OMA" id="RIMVYNF"/>
<dbReference type="OrthoDB" id="6252103at2759"/>
<dbReference type="PAN-GO" id="Q8N1V2">
    <property type="GO annotations" value="1 GO annotation based on evolutionary models"/>
</dbReference>
<dbReference type="PhylomeDB" id="Q8N1V2"/>
<dbReference type="TreeFam" id="TF323254"/>
<dbReference type="PathwayCommons" id="Q8N1V2"/>
<dbReference type="SignaLink" id="Q8N1V2"/>
<dbReference type="BioGRID-ORCS" id="146845">
    <property type="hits" value="14 hits in 1147 CRISPR screens"/>
</dbReference>
<dbReference type="ChiTaRS" id="CFAP52">
    <property type="organism name" value="human"/>
</dbReference>
<dbReference type="GenomeRNAi" id="146845"/>
<dbReference type="Pharos" id="Q8N1V2">
    <property type="development level" value="Tbio"/>
</dbReference>
<dbReference type="PRO" id="PR:Q8N1V2"/>
<dbReference type="Proteomes" id="UP000005640">
    <property type="component" value="Chromosome 17"/>
</dbReference>
<dbReference type="RNAct" id="Q8N1V2">
    <property type="molecule type" value="protein"/>
</dbReference>
<dbReference type="Bgee" id="ENSG00000166596">
    <property type="expression patterns" value="Expressed in bronchial epithelial cell and 114 other cell types or tissues"/>
</dbReference>
<dbReference type="ExpressionAtlas" id="Q8N1V2">
    <property type="expression patterns" value="baseline and differential"/>
</dbReference>
<dbReference type="GO" id="GO:0097729">
    <property type="term" value="C:9+2 motile cilium"/>
    <property type="evidence" value="ECO:0000315"/>
    <property type="project" value="GO_Central"/>
</dbReference>
<dbReference type="GO" id="GO:0160112">
    <property type="term" value="C:axonemal B tubule inner sheath"/>
    <property type="evidence" value="ECO:0000250"/>
    <property type="project" value="UniProtKB"/>
</dbReference>
<dbReference type="GO" id="GO:0005879">
    <property type="term" value="C:axonemal microtubule"/>
    <property type="evidence" value="ECO:0000314"/>
    <property type="project" value="UniProtKB"/>
</dbReference>
<dbReference type="GO" id="GO:0005930">
    <property type="term" value="C:axoneme"/>
    <property type="evidence" value="ECO:0000315"/>
    <property type="project" value="GO_Central"/>
</dbReference>
<dbReference type="GO" id="GO:0036126">
    <property type="term" value="C:sperm flagellum"/>
    <property type="evidence" value="ECO:0000250"/>
    <property type="project" value="UniProtKB"/>
</dbReference>
<dbReference type="GO" id="GO:0097225">
    <property type="term" value="C:sperm midpiece"/>
    <property type="evidence" value="ECO:0007669"/>
    <property type="project" value="Ensembl"/>
</dbReference>
<dbReference type="GO" id="GO:0061966">
    <property type="term" value="P:establishment of left/right asymmetry"/>
    <property type="evidence" value="ECO:0000315"/>
    <property type="project" value="GO_Central"/>
</dbReference>
<dbReference type="GO" id="GO:0030317">
    <property type="term" value="P:flagellated sperm motility"/>
    <property type="evidence" value="ECO:0000315"/>
    <property type="project" value="GO_Central"/>
</dbReference>
<dbReference type="GO" id="GO:0010467">
    <property type="term" value="P:gene expression"/>
    <property type="evidence" value="ECO:0007669"/>
    <property type="project" value="Ensembl"/>
</dbReference>
<dbReference type="GO" id="GO:0051012">
    <property type="term" value="P:microtubule sliding"/>
    <property type="evidence" value="ECO:0007669"/>
    <property type="project" value="Ensembl"/>
</dbReference>
<dbReference type="GO" id="GO:0007338">
    <property type="term" value="P:single fertilization"/>
    <property type="evidence" value="ECO:0007669"/>
    <property type="project" value="Ensembl"/>
</dbReference>
<dbReference type="GO" id="GO:0007286">
    <property type="term" value="P:spermatid development"/>
    <property type="evidence" value="ECO:0007669"/>
    <property type="project" value="Ensembl"/>
</dbReference>
<dbReference type="FunFam" id="2.130.10.10:FF:000173">
    <property type="entry name" value="Cilia- and flagella-associated protein 52"/>
    <property type="match status" value="1"/>
</dbReference>
<dbReference type="FunFam" id="2.130.10.10:FF:000620">
    <property type="entry name" value="cilia- and flagella-associated protein 52 isoform X2"/>
    <property type="match status" value="1"/>
</dbReference>
<dbReference type="FunFam" id="2.130.10.10:FF:000718">
    <property type="entry name" value="cilia- and flagella-associated protein 52 isoform X2"/>
    <property type="match status" value="1"/>
</dbReference>
<dbReference type="Gene3D" id="2.130.10.10">
    <property type="entry name" value="YVTN repeat-like/Quinoprotein amine dehydrogenase"/>
    <property type="match status" value="3"/>
</dbReference>
<dbReference type="InterPro" id="IPR015943">
    <property type="entry name" value="WD40/YVTN_repeat-like_dom_sf"/>
</dbReference>
<dbReference type="InterPro" id="IPR019775">
    <property type="entry name" value="WD40_repeat_CS"/>
</dbReference>
<dbReference type="InterPro" id="IPR036322">
    <property type="entry name" value="WD40_repeat_dom_sf"/>
</dbReference>
<dbReference type="InterPro" id="IPR001680">
    <property type="entry name" value="WD40_rpt"/>
</dbReference>
<dbReference type="InterPro" id="IPR050630">
    <property type="entry name" value="WD_repeat_EMAP"/>
</dbReference>
<dbReference type="PANTHER" id="PTHR13720:SF14">
    <property type="entry name" value="CILIA- AND FLAGELLA-ASSOCIATED PROTEIN 52"/>
    <property type="match status" value="1"/>
</dbReference>
<dbReference type="PANTHER" id="PTHR13720">
    <property type="entry name" value="WD-40 REPEAT PROTEIN"/>
    <property type="match status" value="1"/>
</dbReference>
<dbReference type="Pfam" id="PF00400">
    <property type="entry name" value="WD40"/>
    <property type="match status" value="6"/>
</dbReference>
<dbReference type="SMART" id="SM00320">
    <property type="entry name" value="WD40"/>
    <property type="match status" value="11"/>
</dbReference>
<dbReference type="SUPFAM" id="SSF50978">
    <property type="entry name" value="WD40 repeat-like"/>
    <property type="match status" value="2"/>
</dbReference>
<dbReference type="PROSITE" id="PS00678">
    <property type="entry name" value="WD_REPEATS_1"/>
    <property type="match status" value="2"/>
</dbReference>
<dbReference type="PROSITE" id="PS50082">
    <property type="entry name" value="WD_REPEATS_2"/>
    <property type="match status" value="5"/>
</dbReference>
<dbReference type="PROSITE" id="PS50294">
    <property type="entry name" value="WD_REPEATS_REGION"/>
    <property type="match status" value="2"/>
</dbReference>
<feature type="chain" id="PRO_0000233153" description="Cilia- and flagella-associated protein 52">
    <location>
        <begin position="1"/>
        <end position="620"/>
    </location>
</feature>
<feature type="repeat" description="WD 1" evidence="4">
    <location>
        <begin position="62"/>
        <end position="106"/>
    </location>
</feature>
<feature type="repeat" description="WD 2" evidence="4">
    <location>
        <begin position="109"/>
        <end position="150"/>
    </location>
</feature>
<feature type="repeat" description="WD 3" evidence="4">
    <location>
        <begin position="156"/>
        <end position="195"/>
    </location>
</feature>
<feature type="repeat" description="WD 4" evidence="4">
    <location>
        <begin position="288"/>
        <end position="327"/>
    </location>
</feature>
<feature type="repeat" description="WD 5" evidence="4">
    <location>
        <begin position="330"/>
        <end position="369"/>
    </location>
</feature>
<feature type="repeat" description="WD 6" evidence="4">
    <location>
        <begin position="372"/>
        <end position="411"/>
    </location>
</feature>
<feature type="repeat" description="WD 7" evidence="4">
    <location>
        <begin position="415"/>
        <end position="454"/>
    </location>
</feature>
<feature type="repeat" description="WD 8" evidence="4">
    <location>
        <begin position="459"/>
        <end position="498"/>
    </location>
</feature>
<feature type="repeat" description="WD 9" evidence="4">
    <location>
        <begin position="500"/>
        <end position="539"/>
    </location>
</feature>
<feature type="repeat" description="WD 10" evidence="4">
    <location>
        <begin position="543"/>
        <end position="582"/>
    </location>
</feature>
<feature type="repeat" description="WD 11" evidence="4">
    <location>
        <begin position="585"/>
        <end position="620"/>
    </location>
</feature>
<feature type="splice variant" id="VSP_018067" description="In isoform 2." evidence="10">
    <original>MDNKISPEAQVAELELDAVIGFN</original>
    <variation>MEAVVLPWQIFGVRELPVERGVTMKGPRLFRAP</variation>
    <location>
        <begin position="1"/>
        <end position="23"/>
    </location>
</feature>
<feature type="splice variant" id="VSP_018068" description="In isoform 3." evidence="10">
    <location>
        <begin position="24"/>
        <end position="91"/>
    </location>
</feature>
<feature type="sequence variant" id="VAR_085332" description="In HTX10; loss of panaxonemal expression in respiratory cilia; dbSNP:rs140921334." evidence="8">
    <original>G</original>
    <variation>R</variation>
    <location>
        <position position="271"/>
    </location>
</feature>
<feature type="sequence variant" id="VAR_026057" description="In dbSNP:rs6503235." evidence="5 6">
    <original>E</original>
    <variation>K</variation>
    <location>
        <position position="336"/>
    </location>
</feature>
<feature type="sequence conflict" description="In Ref. 4; AAH25392." evidence="12" ref="4">
    <original>A</original>
    <variation>V</variation>
    <location>
        <position position="91"/>
    </location>
</feature>
<feature type="sequence conflict" description="In Ref. 4; AAH25392." evidence="12" ref="4">
    <original>C</original>
    <variation>S</variation>
    <location>
        <position position="199"/>
    </location>
</feature>
<feature type="sequence conflict" description="In Ref. 2; BAB85083." evidence="12" ref="2">
    <original>G</original>
    <variation>E</variation>
    <location>
        <position position="243"/>
    </location>
</feature>
<comment type="function">
    <text evidence="1 7 8 9">Microtubule inner protein (MIP) part of the dynein-decorated doublet microtubules (DMTs) in cilia axoneme (PubMed:36191189). Important for proper ciliary and flagellar beating. May act in cooperation with CFAP45 and axonemal dynein subunit DNAH11 (PubMed:33139725). May play a role in cell growth and/or survival (PubMed:15967112).</text>
</comment>
<comment type="subunit">
    <text evidence="2 3 7 8">Microtubule inner protein component of sperm flagellar doublet microtubules (By similarity). Interacts with BRCA2 (PubMed:15967112). Interacts with the CCT chaperonin complex (PubMed:15967112). Interacts with HSP70 (PubMed:15967112). Interacts with AK8 (PubMed:33139725). Interacts with CFAP45 (PubMed:33139725). Interacts with DNAI1 (PubMed:33139725). Interacts with IQDC (By similarity).</text>
</comment>
<comment type="subcellular location">
    <subcellularLocation>
        <location evidence="7">Cytoplasm</location>
    </subcellularLocation>
    <subcellularLocation>
        <location evidence="8 9">Cytoplasm</location>
        <location evidence="8 9">Cytoskeleton</location>
        <location evidence="8 9">Cilium axoneme</location>
    </subcellularLocation>
    <subcellularLocation>
        <location evidence="3">Cytoplasm</location>
        <location evidence="3">Cytoskeleton</location>
        <location evidence="3">Flagellum axoneme</location>
    </subcellularLocation>
    <text evidence="8">Located in the proximal region of respiratory cilia.</text>
</comment>
<comment type="alternative products">
    <event type="alternative splicing"/>
    <isoform>
        <id>Q8N1V2-1</id>
        <name>1</name>
        <sequence type="displayed"/>
    </isoform>
    <isoform>
        <id>Q8N1V2-2</id>
        <name>2</name>
        <sequence type="described" ref="VSP_018067"/>
    </isoform>
    <isoform>
        <id>Q8N1V2-3</id>
        <name>3</name>
        <sequence type="described" ref="VSP_018068"/>
    </isoform>
</comment>
<comment type="tissue specificity">
    <text evidence="7 8 9">Expressed in respiratory cells and sperm (at protein level) (PubMed:33139725, PubMed:36191189). Highly expressed in testis (PubMed:15967112). Up-regulated in hepatocellular carcinoma (HCC) (PubMed:15967112).</text>
</comment>
<comment type="disease" evidence="8">
    <disease id="DI-06266">
        <name>Heterotaxy, visceral, 10, autosomal, with male infertility</name>
        <acronym>HTX10</acronym>
        <description>A form of visceral heterotaxy, a complex disorder due to disruption of the normal left-right asymmetry of the thoracoabdominal organs. Visceral heterotaxy or situs ambiguus results in randomization of the placement of visceral organs, including the heart, lungs, liver, spleen, and stomach. The organs are oriented randomly with respect to the left-right axis and with respect to one another. It can be associated with a variety of congenital defects including cardiac malformations. HTX10 is an autosomal recessive form associated with male infertility.</description>
        <dbReference type="MIM" id="619607"/>
    </disease>
    <text>The disease is caused by variants affecting the gene represented in this entry.</text>
</comment>
<comment type="miscellaneous">
    <text>May be a good candidate as a diagnostic marker for HCC as well as a potential molecular target for development of novel therapeutic drugs.</text>
</comment>
<comment type="similarity">
    <text evidence="12">Belongs to the CFAP52 family.</text>
</comment>
<comment type="sequence caution" evidence="12">
    <conflict type="frameshift">
        <sequence resource="EMBL-CDS" id="BAB85083"/>
    </conflict>
</comment>
<accession>Q8N1V2</accession>
<accession>B2RDU7</accession>
<accession>Q5DX23</accession>
<accession>Q8TC73</accession>
<accession>Q8TCI3</accession>
<evidence type="ECO:0000250" key="1">
    <source>
        <dbReference type="UniProtKB" id="E1BKF9"/>
    </source>
</evidence>
<evidence type="ECO:0000250" key="2">
    <source>
        <dbReference type="UniProtKB" id="F1SS88"/>
    </source>
</evidence>
<evidence type="ECO:0000250" key="3">
    <source>
        <dbReference type="UniProtKB" id="Q5F201"/>
    </source>
</evidence>
<evidence type="ECO:0000255" key="4"/>
<evidence type="ECO:0000269" key="5">
    <source>
    </source>
</evidence>
<evidence type="ECO:0000269" key="6">
    <source>
    </source>
</evidence>
<evidence type="ECO:0000269" key="7">
    <source>
    </source>
</evidence>
<evidence type="ECO:0000269" key="8">
    <source>
    </source>
</evidence>
<evidence type="ECO:0000269" key="9">
    <source>
    </source>
</evidence>
<evidence type="ECO:0000303" key="10">
    <source>
    </source>
</evidence>
<evidence type="ECO:0000303" key="11">
    <source>
    </source>
</evidence>
<evidence type="ECO:0000305" key="12"/>
<evidence type="ECO:0000312" key="13">
    <source>
        <dbReference type="HGNC" id="HGNC:16053"/>
    </source>
</evidence>
<evidence type="ECO:0007744" key="14">
    <source>
        <dbReference type="PDB" id="7UNG"/>
    </source>
</evidence>
<organism>
    <name type="scientific">Homo sapiens</name>
    <name type="common">Human</name>
    <dbReference type="NCBI Taxonomy" id="9606"/>
    <lineage>
        <taxon>Eukaryota</taxon>
        <taxon>Metazoa</taxon>
        <taxon>Chordata</taxon>
        <taxon>Craniata</taxon>
        <taxon>Vertebrata</taxon>
        <taxon>Euteleostomi</taxon>
        <taxon>Mammalia</taxon>
        <taxon>Eutheria</taxon>
        <taxon>Euarchontoglires</taxon>
        <taxon>Primates</taxon>
        <taxon>Haplorrhini</taxon>
        <taxon>Catarrhini</taxon>
        <taxon>Hominidae</taxon>
        <taxon>Homo</taxon>
    </lineage>
</organism>
<name>CFA52_HUMAN</name>
<proteinExistence type="evidence at protein level"/>
<gene>
    <name evidence="13" type="primary">CFAP52</name>
    <name evidence="13" type="synonym">WDR16</name>
    <name evidence="11" type="synonym">WDRPUH</name>
</gene>
<sequence>MDNKISPEAQVAELELDAVIGFNGHVPTGLKCHPDQEHMIYPLGCTVLIQAINTKEQNFLQGHGNNVSCLAISRSGEYIASGQVTFMGFKADIILWDYKNRELLARLSLHKGKIEALAFSPNDLYLVSLGGPDDGSVVVWSIAKRDAICGSPAAGLNVGNATNVIFSRCRDEMFMTAGNGTIRVWELDLPNRKIWPTECQTGQLKRIVMSIGVDDDDSFFYLGTTTGDILKMNPRTKLLTDVGPAKDKFSLGVSAIRCLKMGGLLVGSGAGLLVFCKSPGYKPIKKIQLQGGITSITLRGEGHQFLVGTEESHIYRVSFTDFKETLIATCHFDAVEDIVFPFGTAELFATCAKKDIRVWHTSSNRELLRITVPNMTCHGIDFMRDGKSIISAWNDGKIRAFAPETGRLMYVINNAHRIGVTAIATTSDCKRVISGGGEGEVRVWQIGCQTQKLEEALKEHKSSVSCIRVKRNNEECVTASTDGTCIIWDLVRLRRNQMILANTLFQCVCYHPEEFQIITSGTDRKIAYWEVFDGTVIRELEGSLSGSINGMDITQEGVHFVTGGNDHLVKVWDYNEGEVTHVGVGHSGNITRIRISPGNQYIVSVSADGAILRWKYPYTS</sequence>